<reference key="1">
    <citation type="journal article" date="1999" name="Genetics">
        <title>Divergence of the hyperthermophilic archaea Pyrococcus furiosus and P. horikoshii inferred from complete genomic sequences.</title>
        <authorList>
            <person name="Maeder D.L."/>
            <person name="Weiss R.B."/>
            <person name="Dunn D.M."/>
            <person name="Cherry J.L."/>
            <person name="Gonzalez J.M."/>
            <person name="DiRuggiero J."/>
            <person name="Robb F.T."/>
        </authorList>
    </citation>
    <scope>NUCLEOTIDE SEQUENCE [LARGE SCALE GENOMIC DNA]</scope>
    <source>
        <strain>ATCC 43587 / DSM 3638 / JCM 8422 / Vc1</strain>
    </source>
</reference>
<protein>
    <recommendedName>
        <fullName evidence="1">UPF0273 protein PF1931</fullName>
    </recommendedName>
</protein>
<comment type="similarity">
    <text evidence="1">Belongs to the UPF0273 family.</text>
</comment>
<feature type="chain" id="PRO_0000184589" description="UPF0273 protein PF1931">
    <location>
        <begin position="1"/>
        <end position="247"/>
    </location>
</feature>
<feature type="domain" description="KaiC" evidence="1">
    <location>
        <begin position="3"/>
        <end position="247"/>
    </location>
</feature>
<feature type="binding site" evidence="1">
    <location>
        <begin position="30"/>
        <end position="37"/>
    </location>
    <ligand>
        <name>ATP</name>
        <dbReference type="ChEBI" id="CHEBI:30616"/>
    </ligand>
</feature>
<evidence type="ECO:0000255" key="1">
    <source>
        <dbReference type="HAMAP-Rule" id="MF_01076"/>
    </source>
</evidence>
<proteinExistence type="inferred from homology"/>
<sequence>MVRRVKTGIPGMDEILHGGIPERNVVLLSGGPGTGKSIFSQQFLWNGLQMGEPGIYVALEEHPVQVRQNMAQFGWDVRKYEEEGLFAMVDAFTAGVGKSKEYEKYIVHDLTDIREFIEVLRQAIRDINAKRVVVDSVTTLYINKPAMARSIILQLKRVLAGTGCTSIFVSQISVGERGFGGPGVEHGVDGIIRLDLDEIDGELKRSLIVWKMRGTSHSMKRHPFDITDKGIIVYPDKVLKRGRIYEL</sequence>
<name>Y1931_PYRFU</name>
<accession>Q8TZQ5</accession>
<organism>
    <name type="scientific">Pyrococcus furiosus (strain ATCC 43587 / DSM 3638 / JCM 8422 / Vc1)</name>
    <dbReference type="NCBI Taxonomy" id="186497"/>
    <lineage>
        <taxon>Archaea</taxon>
        <taxon>Methanobacteriati</taxon>
        <taxon>Methanobacteriota</taxon>
        <taxon>Thermococci</taxon>
        <taxon>Thermococcales</taxon>
        <taxon>Thermococcaceae</taxon>
        <taxon>Pyrococcus</taxon>
    </lineage>
</organism>
<gene>
    <name type="ordered locus">PF1931</name>
</gene>
<dbReference type="EMBL" id="AE009950">
    <property type="protein sequence ID" value="AAL82055.1"/>
    <property type="molecule type" value="Genomic_DNA"/>
</dbReference>
<dbReference type="RefSeq" id="WP_011013071.1">
    <property type="nucleotide sequence ID" value="NZ_CP023154.1"/>
</dbReference>
<dbReference type="SMR" id="Q8TZQ5"/>
<dbReference type="IntAct" id="Q8TZQ5">
    <property type="interactions" value="1"/>
</dbReference>
<dbReference type="STRING" id="186497.PF1931"/>
<dbReference type="PaxDb" id="186497-PF1931"/>
<dbReference type="KEGG" id="pfu:PF1931"/>
<dbReference type="PATRIC" id="fig|186497.12.peg.2003"/>
<dbReference type="eggNOG" id="arCOG01171">
    <property type="taxonomic scope" value="Archaea"/>
</dbReference>
<dbReference type="HOGENOM" id="CLU_023669_2_0_2"/>
<dbReference type="OrthoDB" id="27015at2157"/>
<dbReference type="PhylomeDB" id="Q8TZQ5"/>
<dbReference type="Proteomes" id="UP000001013">
    <property type="component" value="Chromosome"/>
</dbReference>
<dbReference type="GO" id="GO:0005524">
    <property type="term" value="F:ATP binding"/>
    <property type="evidence" value="ECO:0007669"/>
    <property type="project" value="UniProtKB-UniRule"/>
</dbReference>
<dbReference type="CDD" id="cd19486">
    <property type="entry name" value="KaiC_arch"/>
    <property type="match status" value="1"/>
</dbReference>
<dbReference type="Gene3D" id="3.40.50.300">
    <property type="entry name" value="P-loop containing nucleotide triphosphate hydrolases"/>
    <property type="match status" value="1"/>
</dbReference>
<dbReference type="HAMAP" id="MF_01076">
    <property type="entry name" value="UPF0273"/>
    <property type="match status" value="1"/>
</dbReference>
<dbReference type="InterPro" id="IPR014774">
    <property type="entry name" value="KaiC-like_dom"/>
</dbReference>
<dbReference type="InterPro" id="IPR010624">
    <property type="entry name" value="KaiC_dom"/>
</dbReference>
<dbReference type="InterPro" id="IPR027417">
    <property type="entry name" value="P-loop_NTPase"/>
</dbReference>
<dbReference type="InterPro" id="IPR022475">
    <property type="entry name" value="UPF0273_KaiC-like"/>
</dbReference>
<dbReference type="NCBIfam" id="TIGR03877">
    <property type="entry name" value="thermo_KaiC_1"/>
    <property type="match status" value="1"/>
</dbReference>
<dbReference type="PANTHER" id="PTHR43637">
    <property type="entry name" value="UPF0273 PROTEIN TM_0370"/>
    <property type="match status" value="1"/>
</dbReference>
<dbReference type="PANTHER" id="PTHR43637:SF1">
    <property type="entry name" value="UPF0273 PROTEIN TM_0370"/>
    <property type="match status" value="1"/>
</dbReference>
<dbReference type="Pfam" id="PF06745">
    <property type="entry name" value="ATPase"/>
    <property type="match status" value="1"/>
</dbReference>
<dbReference type="PRINTS" id="PR01874">
    <property type="entry name" value="DNAREPAIRADA"/>
</dbReference>
<dbReference type="SUPFAM" id="SSF52540">
    <property type="entry name" value="P-loop containing nucleoside triphosphate hydrolases"/>
    <property type="match status" value="1"/>
</dbReference>
<dbReference type="PROSITE" id="PS51146">
    <property type="entry name" value="KAIC"/>
    <property type="match status" value="1"/>
</dbReference>
<keyword id="KW-0067">ATP-binding</keyword>
<keyword id="KW-0547">Nucleotide-binding</keyword>
<keyword id="KW-1185">Reference proteome</keyword>